<evidence type="ECO:0000250" key="1"/>
<evidence type="ECO:0000250" key="2">
    <source>
        <dbReference type="UniProtKB" id="P14324"/>
    </source>
</evidence>
<evidence type="ECO:0000305" key="3"/>
<gene>
    <name type="ORF">DDB_G0278823</name>
</gene>
<accession>Q54XP1</accession>
<sequence>MNNLKKNDKEVLEEFANLFPILLNEIKKELEKIDFPKESIHWIETVIKANSTGGKMNRGISVLESLESLNEGRALTRHEIFQAQTLGWCVEIFQACYLVSDDIMDQSLKRRGKPCWYKQKRPNSDQEVGLAAINDSFIIESCVFILLEKYFKNESYYLNIVELFHKTGFQTQLGQLLDLTTQPIRGDFSSINLKNHTRITEYKTAYYSFFFPVALAMLMSKINHEQAFTTAKDILLPMGVYFQVQDDFLDCYGSPEVFGKIGRDIEENKCSWMICQAILNGTPDQINLLKKHYGFDNPTDVEIVKKIYKEINLEKIFKDYENTSYNFLIDKIKTTCIYLPPSVFLKILSKIYKRDK</sequence>
<proteinExistence type="inferred from homology"/>
<name>Y8823_DICDI</name>
<comment type="function">
    <text evidence="1">Key enzyme in isoprenoid biosynthesis which catalyzes the formation of farnesyl diphosphate (FPP), a sterol precursor.</text>
</comment>
<comment type="catalytic activity">
    <reaction>
        <text>isopentenyl diphosphate + dimethylallyl diphosphate = (2E)-geranyl diphosphate + diphosphate</text>
        <dbReference type="Rhea" id="RHEA:22408"/>
        <dbReference type="ChEBI" id="CHEBI:33019"/>
        <dbReference type="ChEBI" id="CHEBI:57623"/>
        <dbReference type="ChEBI" id="CHEBI:58057"/>
        <dbReference type="ChEBI" id="CHEBI:128769"/>
        <dbReference type="EC" id="2.5.1.1"/>
    </reaction>
</comment>
<comment type="catalytic activity">
    <reaction>
        <text>isopentenyl diphosphate + (2E)-geranyl diphosphate = (2E,6E)-farnesyl diphosphate + diphosphate</text>
        <dbReference type="Rhea" id="RHEA:19361"/>
        <dbReference type="ChEBI" id="CHEBI:33019"/>
        <dbReference type="ChEBI" id="CHEBI:58057"/>
        <dbReference type="ChEBI" id="CHEBI:128769"/>
        <dbReference type="ChEBI" id="CHEBI:175763"/>
        <dbReference type="EC" id="2.5.1.10"/>
    </reaction>
</comment>
<comment type="cofactor">
    <cofactor evidence="1">
        <name>Mg(2+)</name>
        <dbReference type="ChEBI" id="CHEBI:18420"/>
    </cofactor>
    <text evidence="1">Binds 2 Mg(2+) ions per subunit.</text>
</comment>
<comment type="activity regulation">
    <text evidence="1">Inhibited by aminobisphosphonate drugs (aBP), such as risedronate and alendronate.</text>
</comment>
<comment type="pathway">
    <text>Isoprenoid biosynthesis; farnesyl diphosphate biosynthesis; farnesyl diphosphate from geranyl diphosphate and isopentenyl diphosphate: step 1/1.</text>
</comment>
<comment type="pathway">
    <text>Isoprenoid biosynthesis; geranyl diphosphate biosynthesis; geranyl diphosphate from dimethylallyl diphosphate and isopentenyl diphosphate: step 1/1.</text>
</comment>
<comment type="subcellular location">
    <subcellularLocation>
        <location evidence="3">Cytoplasm</location>
    </subcellularLocation>
</comment>
<comment type="similarity">
    <text evidence="3">Belongs to the FPP/GGPP synthase family.</text>
</comment>
<organism>
    <name type="scientific">Dictyostelium discoideum</name>
    <name type="common">Social amoeba</name>
    <dbReference type="NCBI Taxonomy" id="44689"/>
    <lineage>
        <taxon>Eukaryota</taxon>
        <taxon>Amoebozoa</taxon>
        <taxon>Evosea</taxon>
        <taxon>Eumycetozoa</taxon>
        <taxon>Dictyostelia</taxon>
        <taxon>Dictyosteliales</taxon>
        <taxon>Dictyosteliaceae</taxon>
        <taxon>Dictyostelium</taxon>
    </lineage>
</organism>
<reference key="1">
    <citation type="journal article" date="2005" name="Nature">
        <title>The genome of the social amoeba Dictyostelium discoideum.</title>
        <authorList>
            <person name="Eichinger L."/>
            <person name="Pachebat J.A."/>
            <person name="Gloeckner G."/>
            <person name="Rajandream M.A."/>
            <person name="Sucgang R."/>
            <person name="Berriman M."/>
            <person name="Song J."/>
            <person name="Olsen R."/>
            <person name="Szafranski K."/>
            <person name="Xu Q."/>
            <person name="Tunggal B."/>
            <person name="Kummerfeld S."/>
            <person name="Madera M."/>
            <person name="Konfortov B.A."/>
            <person name="Rivero F."/>
            <person name="Bankier A.T."/>
            <person name="Lehmann R."/>
            <person name="Hamlin N."/>
            <person name="Davies R."/>
            <person name="Gaudet P."/>
            <person name="Fey P."/>
            <person name="Pilcher K."/>
            <person name="Chen G."/>
            <person name="Saunders D."/>
            <person name="Sodergren E.J."/>
            <person name="Davis P."/>
            <person name="Kerhornou A."/>
            <person name="Nie X."/>
            <person name="Hall N."/>
            <person name="Anjard C."/>
            <person name="Hemphill L."/>
            <person name="Bason N."/>
            <person name="Farbrother P."/>
            <person name="Desany B."/>
            <person name="Just E."/>
            <person name="Morio T."/>
            <person name="Rost R."/>
            <person name="Churcher C.M."/>
            <person name="Cooper J."/>
            <person name="Haydock S."/>
            <person name="van Driessche N."/>
            <person name="Cronin A."/>
            <person name="Goodhead I."/>
            <person name="Muzny D.M."/>
            <person name="Mourier T."/>
            <person name="Pain A."/>
            <person name="Lu M."/>
            <person name="Harper D."/>
            <person name="Lindsay R."/>
            <person name="Hauser H."/>
            <person name="James K.D."/>
            <person name="Quiles M."/>
            <person name="Madan Babu M."/>
            <person name="Saito T."/>
            <person name="Buchrieser C."/>
            <person name="Wardroper A."/>
            <person name="Felder M."/>
            <person name="Thangavelu M."/>
            <person name="Johnson D."/>
            <person name="Knights A."/>
            <person name="Loulseged H."/>
            <person name="Mungall K.L."/>
            <person name="Oliver K."/>
            <person name="Price C."/>
            <person name="Quail M.A."/>
            <person name="Urushihara H."/>
            <person name="Hernandez J."/>
            <person name="Rabbinowitsch E."/>
            <person name="Steffen D."/>
            <person name="Sanders M."/>
            <person name="Ma J."/>
            <person name="Kohara Y."/>
            <person name="Sharp S."/>
            <person name="Simmonds M.N."/>
            <person name="Spiegler S."/>
            <person name="Tivey A."/>
            <person name="Sugano S."/>
            <person name="White B."/>
            <person name="Walker D."/>
            <person name="Woodward J.R."/>
            <person name="Winckler T."/>
            <person name="Tanaka Y."/>
            <person name="Shaulsky G."/>
            <person name="Schleicher M."/>
            <person name="Weinstock G.M."/>
            <person name="Rosenthal A."/>
            <person name="Cox E.C."/>
            <person name="Chisholm R.L."/>
            <person name="Gibbs R.A."/>
            <person name="Loomis W.F."/>
            <person name="Platzer M."/>
            <person name="Kay R.R."/>
            <person name="Williams J.G."/>
            <person name="Dear P.H."/>
            <person name="Noegel A.A."/>
            <person name="Barrell B.G."/>
            <person name="Kuspa A."/>
        </authorList>
    </citation>
    <scope>NUCLEOTIDE SEQUENCE [LARGE SCALE GENOMIC DNA]</scope>
    <source>
        <strain>AX4</strain>
    </source>
</reference>
<feature type="chain" id="PRO_0000388255" description="Probable farnesyl diphosphate synthase DDB_G0278823">
    <location>
        <begin position="1"/>
        <end position="356"/>
    </location>
</feature>
<feature type="binding site" evidence="2">
    <location>
        <position position="55"/>
    </location>
    <ligand>
        <name>isopentenyl diphosphate</name>
        <dbReference type="ChEBI" id="CHEBI:128769"/>
    </ligand>
</feature>
<feature type="binding site" evidence="2">
    <location>
        <position position="58"/>
    </location>
    <ligand>
        <name>isopentenyl diphosphate</name>
        <dbReference type="ChEBI" id="CHEBI:128769"/>
    </ligand>
</feature>
<feature type="binding site" evidence="2">
    <location>
        <position position="94"/>
    </location>
    <ligand>
        <name>isopentenyl diphosphate</name>
        <dbReference type="ChEBI" id="CHEBI:128769"/>
    </ligand>
</feature>
<feature type="binding site" evidence="2">
    <location>
        <position position="101"/>
    </location>
    <ligand>
        <name>Mg(2+)</name>
        <dbReference type="ChEBI" id="CHEBI:18420"/>
        <label>1</label>
    </ligand>
</feature>
<feature type="binding site" evidence="2">
    <location>
        <position position="101"/>
    </location>
    <ligand>
        <name>Mg(2+)</name>
        <dbReference type="ChEBI" id="CHEBI:18420"/>
        <label>2</label>
    </ligand>
</feature>
<feature type="binding site" evidence="2">
    <location>
        <position position="105"/>
    </location>
    <ligand>
        <name>Mg(2+)</name>
        <dbReference type="ChEBI" id="CHEBI:18420"/>
        <label>1</label>
    </ligand>
</feature>
<feature type="binding site" evidence="2">
    <location>
        <position position="105"/>
    </location>
    <ligand>
        <name>Mg(2+)</name>
        <dbReference type="ChEBI" id="CHEBI:18420"/>
        <label>2</label>
    </ligand>
</feature>
<feature type="binding site" evidence="1">
    <location>
        <position position="110"/>
    </location>
    <ligand>
        <name>dimethylallyl diphosphate</name>
        <dbReference type="ChEBI" id="CHEBI:57623"/>
    </ligand>
</feature>
<feature type="binding site" evidence="2">
    <location>
        <position position="111"/>
    </location>
    <ligand>
        <name>isopentenyl diphosphate</name>
        <dbReference type="ChEBI" id="CHEBI:128769"/>
    </ligand>
</feature>
<feature type="binding site" evidence="1">
    <location>
        <position position="203"/>
    </location>
    <ligand>
        <name>dimethylallyl diphosphate</name>
        <dbReference type="ChEBI" id="CHEBI:57623"/>
    </ligand>
</feature>
<feature type="binding site" evidence="1">
    <location>
        <position position="204"/>
    </location>
    <ligand>
        <name>dimethylallyl diphosphate</name>
        <dbReference type="ChEBI" id="CHEBI:57623"/>
    </ligand>
</feature>
<feature type="binding site" evidence="1">
    <location>
        <position position="243"/>
    </location>
    <ligand>
        <name>dimethylallyl diphosphate</name>
        <dbReference type="ChEBI" id="CHEBI:57623"/>
    </ligand>
</feature>
<feature type="binding site" evidence="1">
    <location>
        <position position="260"/>
    </location>
    <ligand>
        <name>dimethylallyl diphosphate</name>
        <dbReference type="ChEBI" id="CHEBI:57623"/>
    </ligand>
</feature>
<feature type="binding site" evidence="1">
    <location>
        <position position="269"/>
    </location>
    <ligand>
        <name>dimethylallyl diphosphate</name>
        <dbReference type="ChEBI" id="CHEBI:57623"/>
    </ligand>
</feature>
<keyword id="KW-0152">Cholesterol biosynthesis</keyword>
<keyword id="KW-0153">Cholesterol metabolism</keyword>
<keyword id="KW-0963">Cytoplasm</keyword>
<keyword id="KW-0414">Isoprene biosynthesis</keyword>
<keyword id="KW-0444">Lipid biosynthesis</keyword>
<keyword id="KW-0443">Lipid metabolism</keyword>
<keyword id="KW-0460">Magnesium</keyword>
<keyword id="KW-0479">Metal-binding</keyword>
<keyword id="KW-1185">Reference proteome</keyword>
<keyword id="KW-0752">Steroid biosynthesis</keyword>
<keyword id="KW-0753">Steroid metabolism</keyword>
<keyword id="KW-0756">Sterol biosynthesis</keyword>
<keyword id="KW-1207">Sterol metabolism</keyword>
<keyword id="KW-0808">Transferase</keyword>
<protein>
    <recommendedName>
        <fullName>Probable farnesyl diphosphate synthase DDB_G0278823</fullName>
        <ecNumber>2.5.1.10</ecNumber>
    </recommendedName>
    <alternativeName>
        <fullName>(2E,6E)-farnesyl diphosphate synthase</fullName>
    </alternativeName>
    <alternativeName>
        <fullName>Dimethylallyltranstransferase</fullName>
        <ecNumber>2.5.1.1</ecNumber>
    </alternativeName>
    <alternativeName>
        <fullName>Farnesyl diphosphate synthase</fullName>
    </alternativeName>
    <alternativeName>
        <fullName>Geranyltranstransferase</fullName>
    </alternativeName>
</protein>
<dbReference type="EC" id="2.5.1.10"/>
<dbReference type="EC" id="2.5.1.1"/>
<dbReference type="EMBL" id="AAFI02000024">
    <property type="protein sequence ID" value="EAL68013.1"/>
    <property type="molecule type" value="Genomic_DNA"/>
</dbReference>
<dbReference type="RefSeq" id="XP_641989.1">
    <property type="nucleotide sequence ID" value="XM_636897.1"/>
</dbReference>
<dbReference type="SMR" id="Q54XP1"/>
<dbReference type="FunCoup" id="Q54XP1">
    <property type="interactions" value="738"/>
</dbReference>
<dbReference type="STRING" id="44689.Q54XP1"/>
<dbReference type="PaxDb" id="44689-DDB0206219"/>
<dbReference type="EnsemblProtists" id="EAL68013">
    <property type="protein sequence ID" value="EAL68013"/>
    <property type="gene ID" value="DDB_G0278823"/>
</dbReference>
<dbReference type="GeneID" id="8621721"/>
<dbReference type="KEGG" id="ddi:DDB_G0278823"/>
<dbReference type="dictyBase" id="DDB_G0278823"/>
<dbReference type="VEuPathDB" id="AmoebaDB:DDB_G0278823"/>
<dbReference type="eggNOG" id="KOG0711">
    <property type="taxonomic scope" value="Eukaryota"/>
</dbReference>
<dbReference type="HOGENOM" id="CLU_028376_0_1_1"/>
<dbReference type="InParanoid" id="Q54XP1"/>
<dbReference type="OMA" id="EDCTWQR"/>
<dbReference type="PhylomeDB" id="Q54XP1"/>
<dbReference type="UniPathway" id="UPA00259">
    <property type="reaction ID" value="UER00368"/>
</dbReference>
<dbReference type="UniPathway" id="UPA00260">
    <property type="reaction ID" value="UER00369"/>
</dbReference>
<dbReference type="PRO" id="PR:Q54XP1"/>
<dbReference type="Proteomes" id="UP000002195">
    <property type="component" value="Chromosome 3"/>
</dbReference>
<dbReference type="GO" id="GO:0005737">
    <property type="term" value="C:cytoplasm"/>
    <property type="evidence" value="ECO:0000318"/>
    <property type="project" value="GO_Central"/>
</dbReference>
<dbReference type="GO" id="GO:0004337">
    <property type="term" value="F:(2E,6E)-farnesyl diphosphate synthase activity"/>
    <property type="evidence" value="ECO:0000318"/>
    <property type="project" value="GO_Central"/>
</dbReference>
<dbReference type="GO" id="GO:0004161">
    <property type="term" value="F:dimethylallyltranstransferase activity"/>
    <property type="evidence" value="ECO:0000318"/>
    <property type="project" value="GO_Central"/>
</dbReference>
<dbReference type="GO" id="GO:0046872">
    <property type="term" value="F:metal ion binding"/>
    <property type="evidence" value="ECO:0007669"/>
    <property type="project" value="UniProtKB-KW"/>
</dbReference>
<dbReference type="GO" id="GO:0006695">
    <property type="term" value="P:cholesterol biosynthetic process"/>
    <property type="evidence" value="ECO:0007669"/>
    <property type="project" value="UniProtKB-KW"/>
</dbReference>
<dbReference type="GO" id="GO:0045337">
    <property type="term" value="P:farnesyl diphosphate biosynthetic process"/>
    <property type="evidence" value="ECO:0000318"/>
    <property type="project" value="GO_Central"/>
</dbReference>
<dbReference type="GO" id="GO:0033384">
    <property type="term" value="P:geranyl diphosphate biosynthetic process"/>
    <property type="evidence" value="ECO:0007669"/>
    <property type="project" value="UniProtKB-UniPathway"/>
</dbReference>
<dbReference type="CDD" id="cd00685">
    <property type="entry name" value="Trans_IPPS_HT"/>
    <property type="match status" value="1"/>
</dbReference>
<dbReference type="FunFam" id="1.10.600.10:FF:000008">
    <property type="entry name" value="Farnesyl pyrophosphate synthase"/>
    <property type="match status" value="1"/>
</dbReference>
<dbReference type="Gene3D" id="1.10.600.10">
    <property type="entry name" value="Farnesyl Diphosphate Synthase"/>
    <property type="match status" value="1"/>
</dbReference>
<dbReference type="InterPro" id="IPR039702">
    <property type="entry name" value="FPS1-like"/>
</dbReference>
<dbReference type="InterPro" id="IPR008949">
    <property type="entry name" value="Isoprenoid_synthase_dom_sf"/>
</dbReference>
<dbReference type="InterPro" id="IPR000092">
    <property type="entry name" value="Polyprenyl_synt"/>
</dbReference>
<dbReference type="InterPro" id="IPR033749">
    <property type="entry name" value="Polyprenyl_synt_CS"/>
</dbReference>
<dbReference type="PANTHER" id="PTHR11525:SF0">
    <property type="entry name" value="FARNESYL PYROPHOSPHATE SYNTHASE"/>
    <property type="match status" value="1"/>
</dbReference>
<dbReference type="PANTHER" id="PTHR11525">
    <property type="entry name" value="FARNESYL-PYROPHOSPHATE SYNTHETASE"/>
    <property type="match status" value="1"/>
</dbReference>
<dbReference type="Pfam" id="PF00348">
    <property type="entry name" value="polyprenyl_synt"/>
    <property type="match status" value="1"/>
</dbReference>
<dbReference type="SFLD" id="SFLDS00005">
    <property type="entry name" value="Isoprenoid_Synthase_Type_I"/>
    <property type="match status" value="1"/>
</dbReference>
<dbReference type="SFLD" id="SFLDG01017">
    <property type="entry name" value="Polyprenyl_Transferase_Like"/>
    <property type="match status" value="1"/>
</dbReference>
<dbReference type="SUPFAM" id="SSF48576">
    <property type="entry name" value="Terpenoid synthases"/>
    <property type="match status" value="1"/>
</dbReference>
<dbReference type="PROSITE" id="PS00723">
    <property type="entry name" value="POLYPRENYL_SYNTHASE_1"/>
    <property type="match status" value="1"/>
</dbReference>
<dbReference type="PROSITE" id="PS00444">
    <property type="entry name" value="POLYPRENYL_SYNTHASE_2"/>
    <property type="match status" value="1"/>
</dbReference>